<keyword id="KW-0002">3D-structure</keyword>
<keyword id="KW-0175">Coiled coil</keyword>
<keyword id="KW-0963">Cytoplasm</keyword>
<keyword id="KW-1185">Reference proteome</keyword>
<protein>
    <recommendedName>
        <fullName>Tumor necrosis factor alpha-induced protein 8-like protein 1</fullName>
        <shortName evidence="1">TIPE1</shortName>
        <shortName>TNF alpha-induced protein 8-like protein 1</shortName>
        <shortName>TNFAIP8-like protein 1</shortName>
    </recommendedName>
</protein>
<sequence>MDSFSTKNLALQAQKKLMSKMATKTVANLFIDDTSSEVLDELYRVTKEYTRNRKEAQKIIKNLIKMVVKLGVLYRNGQFNNEELALVERFRKKVHTLAMTAVSFYQIDFTFDRRVMSNLLNDCRELLHQAINRHLTAKSHARINHVFNHFADCDFLATLYGPSEVYRGHLQKICEGVNKMLDEGNL</sequence>
<comment type="subcellular location">
    <subcellularLocation>
        <location evidence="1">Cytoplasm</location>
    </subcellularLocation>
</comment>
<comment type="similarity">
    <text evidence="3">Belongs to the TNFAIP8 family.</text>
</comment>
<organism>
    <name type="scientific">Danio rerio</name>
    <name type="common">Zebrafish</name>
    <name type="synonym">Brachydanio rerio</name>
    <dbReference type="NCBI Taxonomy" id="7955"/>
    <lineage>
        <taxon>Eukaryota</taxon>
        <taxon>Metazoa</taxon>
        <taxon>Chordata</taxon>
        <taxon>Craniata</taxon>
        <taxon>Vertebrata</taxon>
        <taxon>Euteleostomi</taxon>
        <taxon>Actinopterygii</taxon>
        <taxon>Neopterygii</taxon>
        <taxon>Teleostei</taxon>
        <taxon>Ostariophysi</taxon>
        <taxon>Cypriniformes</taxon>
        <taxon>Danionidae</taxon>
        <taxon>Danioninae</taxon>
        <taxon>Danio</taxon>
    </lineage>
</organism>
<evidence type="ECO:0000250" key="1">
    <source>
        <dbReference type="UniProtKB" id="Q8K288"/>
    </source>
</evidence>
<evidence type="ECO:0000255" key="2"/>
<evidence type="ECO:0000305" key="3"/>
<evidence type="ECO:0007829" key="4">
    <source>
        <dbReference type="PDB" id="8GYN"/>
    </source>
</evidence>
<dbReference type="EMBL" id="BX649252">
    <property type="protein sequence ID" value="CAK11082.1"/>
    <property type="molecule type" value="Genomic_DNA"/>
</dbReference>
<dbReference type="EMBL" id="BC052765">
    <property type="protein sequence ID" value="AAH52765.1"/>
    <property type="molecule type" value="mRNA"/>
</dbReference>
<dbReference type="RefSeq" id="NP_956626.1">
    <property type="nucleotide sequence ID" value="NM_200332.2"/>
</dbReference>
<dbReference type="PDB" id="8GYN">
    <property type="method" value="X-ray"/>
    <property type="resolution" value="1.38 A"/>
    <property type="chains" value="A=31-186"/>
</dbReference>
<dbReference type="PDBsum" id="8GYN"/>
<dbReference type="SMR" id="Q7SZE8"/>
<dbReference type="FunCoup" id="Q7SZE8">
    <property type="interactions" value="1073"/>
</dbReference>
<dbReference type="STRING" id="7955.ENSDARP00000119527"/>
<dbReference type="PaxDb" id="7955-ENSDARP00000119527"/>
<dbReference type="Ensembl" id="ENSDART00000124889">
    <property type="protein sequence ID" value="ENSDARP00000108146"/>
    <property type="gene ID" value="ENSDARG00000086457"/>
</dbReference>
<dbReference type="Ensembl" id="ENSDART00000140313">
    <property type="protein sequence ID" value="ENSDARP00000119527"/>
    <property type="gene ID" value="ENSDARG00000086457"/>
</dbReference>
<dbReference type="GeneID" id="393303"/>
<dbReference type="KEGG" id="dre:393303"/>
<dbReference type="AGR" id="ZFIN:ZDB-GENE-040426-695"/>
<dbReference type="CTD" id="126282"/>
<dbReference type="ZFIN" id="ZDB-GENE-040426-695">
    <property type="gene designation" value="tnfaip8l1"/>
</dbReference>
<dbReference type="eggNOG" id="ENOG502S00N">
    <property type="taxonomic scope" value="Eukaryota"/>
</dbReference>
<dbReference type="HOGENOM" id="CLU_085918_1_0_1"/>
<dbReference type="InParanoid" id="Q7SZE8"/>
<dbReference type="OMA" id="QRICNGL"/>
<dbReference type="OrthoDB" id="10055976at2759"/>
<dbReference type="PhylomeDB" id="Q7SZE8"/>
<dbReference type="TreeFam" id="TF323415"/>
<dbReference type="Reactome" id="R-DRE-1483255">
    <property type="pathway name" value="PI Metabolism"/>
</dbReference>
<dbReference type="PRO" id="PR:Q7SZE8"/>
<dbReference type="Proteomes" id="UP000000437">
    <property type="component" value="Chromosome 22"/>
</dbReference>
<dbReference type="Bgee" id="ENSDARG00000086457">
    <property type="expression patterns" value="Expressed in early embryo and 31 other cell types or tissues"/>
</dbReference>
<dbReference type="GO" id="GO:0005737">
    <property type="term" value="C:cytoplasm"/>
    <property type="evidence" value="ECO:0000250"/>
    <property type="project" value="UniProtKB"/>
</dbReference>
<dbReference type="GO" id="GO:0032007">
    <property type="term" value="P:negative regulation of TOR signaling"/>
    <property type="evidence" value="ECO:0000250"/>
    <property type="project" value="UniProtKB"/>
</dbReference>
<dbReference type="GO" id="GO:0042981">
    <property type="term" value="P:regulation of apoptotic process"/>
    <property type="evidence" value="ECO:0007669"/>
    <property type="project" value="InterPro"/>
</dbReference>
<dbReference type="FunFam" id="1.20.1440.160:FF:000001">
    <property type="entry name" value="Tumor necrosis factor alpha-induced protein 8-like 1"/>
    <property type="match status" value="1"/>
</dbReference>
<dbReference type="Gene3D" id="1.20.1440.160">
    <property type="entry name" value="Tumor necrosis factor alpha-induced protein 8-like"/>
    <property type="match status" value="1"/>
</dbReference>
<dbReference type="InterPro" id="IPR008477">
    <property type="entry name" value="TNFAIP8-like"/>
</dbReference>
<dbReference type="InterPro" id="IPR038355">
    <property type="entry name" value="TNFAIP8_sf"/>
</dbReference>
<dbReference type="PANTHER" id="PTHR12757:SF2">
    <property type="entry name" value="TUMOR NECROSIS FACTOR ALPHA-INDUCED PROTEIN 8-LIKE PROTEIN 1"/>
    <property type="match status" value="1"/>
</dbReference>
<dbReference type="PANTHER" id="PTHR12757">
    <property type="entry name" value="TUMOR NECROSIS FACTOR INDUCED PROTEIN"/>
    <property type="match status" value="1"/>
</dbReference>
<dbReference type="Pfam" id="PF05527">
    <property type="entry name" value="DUF758"/>
    <property type="match status" value="1"/>
</dbReference>
<feature type="chain" id="PRO_0000285727" description="Tumor necrosis factor alpha-induced protein 8-like protein 1">
    <location>
        <begin position="1"/>
        <end position="186"/>
    </location>
</feature>
<feature type="coiled-coil region" evidence="2">
    <location>
        <begin position="37"/>
        <end position="70"/>
    </location>
</feature>
<feature type="helix" evidence="4">
    <location>
        <begin position="33"/>
        <end position="50"/>
    </location>
</feature>
<feature type="helix" evidence="4">
    <location>
        <begin position="53"/>
        <end position="75"/>
    </location>
</feature>
<feature type="helix" evidence="4">
    <location>
        <begin position="81"/>
        <end position="106"/>
    </location>
</feature>
<feature type="helix" evidence="4">
    <location>
        <begin position="113"/>
        <end position="131"/>
    </location>
</feature>
<feature type="turn" evidence="4">
    <location>
        <begin position="132"/>
        <end position="134"/>
    </location>
</feature>
<feature type="helix" evidence="4">
    <location>
        <begin position="137"/>
        <end position="150"/>
    </location>
</feature>
<feature type="helix" evidence="4">
    <location>
        <begin position="153"/>
        <end position="159"/>
    </location>
</feature>
<feature type="helix" evidence="4">
    <location>
        <begin position="164"/>
        <end position="183"/>
    </location>
</feature>
<gene>
    <name type="primary">tnfaip8l1</name>
    <name type="synonym">tnfaip8</name>
    <name type="ORF">si:dkey-49m19.6</name>
    <name type="ORF">zgc:55331</name>
</gene>
<proteinExistence type="evidence at protein level"/>
<reference key="1">
    <citation type="journal article" date="2013" name="Nature">
        <title>The zebrafish reference genome sequence and its relationship to the human genome.</title>
        <authorList>
            <person name="Howe K."/>
            <person name="Clark M.D."/>
            <person name="Torroja C.F."/>
            <person name="Torrance J."/>
            <person name="Berthelot C."/>
            <person name="Muffato M."/>
            <person name="Collins J.E."/>
            <person name="Humphray S."/>
            <person name="McLaren K."/>
            <person name="Matthews L."/>
            <person name="McLaren S."/>
            <person name="Sealy I."/>
            <person name="Caccamo M."/>
            <person name="Churcher C."/>
            <person name="Scott C."/>
            <person name="Barrett J.C."/>
            <person name="Koch R."/>
            <person name="Rauch G.J."/>
            <person name="White S."/>
            <person name="Chow W."/>
            <person name="Kilian B."/>
            <person name="Quintais L.T."/>
            <person name="Guerra-Assuncao J.A."/>
            <person name="Zhou Y."/>
            <person name="Gu Y."/>
            <person name="Yen J."/>
            <person name="Vogel J.H."/>
            <person name="Eyre T."/>
            <person name="Redmond S."/>
            <person name="Banerjee R."/>
            <person name="Chi J."/>
            <person name="Fu B."/>
            <person name="Langley E."/>
            <person name="Maguire S.F."/>
            <person name="Laird G.K."/>
            <person name="Lloyd D."/>
            <person name="Kenyon E."/>
            <person name="Donaldson S."/>
            <person name="Sehra H."/>
            <person name="Almeida-King J."/>
            <person name="Loveland J."/>
            <person name="Trevanion S."/>
            <person name="Jones M."/>
            <person name="Quail M."/>
            <person name="Willey D."/>
            <person name="Hunt A."/>
            <person name="Burton J."/>
            <person name="Sims S."/>
            <person name="McLay K."/>
            <person name="Plumb B."/>
            <person name="Davis J."/>
            <person name="Clee C."/>
            <person name="Oliver K."/>
            <person name="Clark R."/>
            <person name="Riddle C."/>
            <person name="Elliot D."/>
            <person name="Threadgold G."/>
            <person name="Harden G."/>
            <person name="Ware D."/>
            <person name="Begum S."/>
            <person name="Mortimore B."/>
            <person name="Kerry G."/>
            <person name="Heath P."/>
            <person name="Phillimore B."/>
            <person name="Tracey A."/>
            <person name="Corby N."/>
            <person name="Dunn M."/>
            <person name="Johnson C."/>
            <person name="Wood J."/>
            <person name="Clark S."/>
            <person name="Pelan S."/>
            <person name="Griffiths G."/>
            <person name="Smith M."/>
            <person name="Glithero R."/>
            <person name="Howden P."/>
            <person name="Barker N."/>
            <person name="Lloyd C."/>
            <person name="Stevens C."/>
            <person name="Harley J."/>
            <person name="Holt K."/>
            <person name="Panagiotidis G."/>
            <person name="Lovell J."/>
            <person name="Beasley H."/>
            <person name="Henderson C."/>
            <person name="Gordon D."/>
            <person name="Auger K."/>
            <person name="Wright D."/>
            <person name="Collins J."/>
            <person name="Raisen C."/>
            <person name="Dyer L."/>
            <person name="Leung K."/>
            <person name="Robertson L."/>
            <person name="Ambridge K."/>
            <person name="Leongamornlert D."/>
            <person name="McGuire S."/>
            <person name="Gilderthorp R."/>
            <person name="Griffiths C."/>
            <person name="Manthravadi D."/>
            <person name="Nichol S."/>
            <person name="Barker G."/>
            <person name="Whitehead S."/>
            <person name="Kay M."/>
            <person name="Brown J."/>
            <person name="Murnane C."/>
            <person name="Gray E."/>
            <person name="Humphries M."/>
            <person name="Sycamore N."/>
            <person name="Barker D."/>
            <person name="Saunders D."/>
            <person name="Wallis J."/>
            <person name="Babbage A."/>
            <person name="Hammond S."/>
            <person name="Mashreghi-Mohammadi M."/>
            <person name="Barr L."/>
            <person name="Martin S."/>
            <person name="Wray P."/>
            <person name="Ellington A."/>
            <person name="Matthews N."/>
            <person name="Ellwood M."/>
            <person name="Woodmansey R."/>
            <person name="Clark G."/>
            <person name="Cooper J."/>
            <person name="Tromans A."/>
            <person name="Grafham D."/>
            <person name="Skuce C."/>
            <person name="Pandian R."/>
            <person name="Andrews R."/>
            <person name="Harrison E."/>
            <person name="Kimberley A."/>
            <person name="Garnett J."/>
            <person name="Fosker N."/>
            <person name="Hall R."/>
            <person name="Garner P."/>
            <person name="Kelly D."/>
            <person name="Bird C."/>
            <person name="Palmer S."/>
            <person name="Gehring I."/>
            <person name="Berger A."/>
            <person name="Dooley C.M."/>
            <person name="Ersan-Urun Z."/>
            <person name="Eser C."/>
            <person name="Geiger H."/>
            <person name="Geisler M."/>
            <person name="Karotki L."/>
            <person name="Kirn A."/>
            <person name="Konantz J."/>
            <person name="Konantz M."/>
            <person name="Oberlander M."/>
            <person name="Rudolph-Geiger S."/>
            <person name="Teucke M."/>
            <person name="Lanz C."/>
            <person name="Raddatz G."/>
            <person name="Osoegawa K."/>
            <person name="Zhu B."/>
            <person name="Rapp A."/>
            <person name="Widaa S."/>
            <person name="Langford C."/>
            <person name="Yang F."/>
            <person name="Schuster S.C."/>
            <person name="Carter N.P."/>
            <person name="Harrow J."/>
            <person name="Ning Z."/>
            <person name="Herrero J."/>
            <person name="Searle S.M."/>
            <person name="Enright A."/>
            <person name="Geisler R."/>
            <person name="Plasterk R.H."/>
            <person name="Lee C."/>
            <person name="Westerfield M."/>
            <person name="de Jong P.J."/>
            <person name="Zon L.I."/>
            <person name="Postlethwait J.H."/>
            <person name="Nusslein-Volhard C."/>
            <person name="Hubbard T.J."/>
            <person name="Roest Crollius H."/>
            <person name="Rogers J."/>
            <person name="Stemple D.L."/>
        </authorList>
    </citation>
    <scope>NUCLEOTIDE SEQUENCE [LARGE SCALE GENOMIC DNA]</scope>
    <source>
        <strain>Tuebingen</strain>
    </source>
</reference>
<reference key="2">
    <citation type="submission" date="2003-05" db="EMBL/GenBank/DDBJ databases">
        <authorList>
            <consortium name="NIH - Zebrafish Gene Collection (ZGC) project"/>
        </authorList>
    </citation>
    <scope>NUCLEOTIDE SEQUENCE [LARGE SCALE MRNA]</scope>
    <source>
        <strain>AB</strain>
    </source>
</reference>
<name>TP8L1_DANRE</name>
<accession>Q7SZE8</accession>